<protein>
    <recommendedName>
        <fullName>LIM domain-binding protein 1</fullName>
        <shortName>LDB-1</shortName>
    </recommendedName>
    <alternativeName>
        <fullName>Carboxyl-terminal LIM domain-binding protein 2</fullName>
        <shortName>CLIM-2</shortName>
    </alternativeName>
    <alternativeName>
        <fullName>LIM domain-binding factor CLIM2</fullName>
        <shortName>hLdb1</shortName>
    </alternativeName>
    <alternativeName>
        <fullName>Nuclear LIM interactor</fullName>
    </alternativeName>
</protein>
<evidence type="ECO:0000250" key="1">
    <source>
        <dbReference type="UniProtKB" id="P70662"/>
    </source>
</evidence>
<evidence type="ECO:0000255" key="2">
    <source>
        <dbReference type="PROSITE-ProRule" id="PRU01302"/>
    </source>
</evidence>
<evidence type="ECO:0000256" key="3">
    <source>
        <dbReference type="SAM" id="MobiDB-lite"/>
    </source>
</evidence>
<evidence type="ECO:0000269" key="4">
    <source>
    </source>
</evidence>
<evidence type="ECO:0000269" key="5">
    <source>
    </source>
</evidence>
<evidence type="ECO:0000269" key="6">
    <source>
    </source>
</evidence>
<evidence type="ECO:0000269" key="7">
    <source>
    </source>
</evidence>
<evidence type="ECO:0000303" key="8">
    <source>
    </source>
</evidence>
<evidence type="ECO:0000303" key="9">
    <source>
    </source>
</evidence>
<evidence type="ECO:0000303" key="10">
    <source>
    </source>
</evidence>
<evidence type="ECO:0000303" key="11">
    <source>
    </source>
</evidence>
<evidence type="ECO:0000303" key="12">
    <source>
    </source>
</evidence>
<evidence type="ECO:0000303" key="13">
    <source ref="5"/>
</evidence>
<evidence type="ECO:0000303" key="14">
    <source ref="6"/>
</evidence>
<evidence type="ECO:0000305" key="15"/>
<evidence type="ECO:0007744" key="16">
    <source>
    </source>
</evidence>
<evidence type="ECO:0007744" key="17">
    <source>
    </source>
</evidence>
<evidence type="ECO:0007829" key="18">
    <source>
        <dbReference type="PDB" id="2XJY"/>
    </source>
</evidence>
<evidence type="ECO:0007829" key="19">
    <source>
        <dbReference type="PDB" id="2XJZ"/>
    </source>
</evidence>
<evidence type="ECO:0007829" key="20">
    <source>
        <dbReference type="PDB" id="8HIB"/>
    </source>
</evidence>
<evidence type="ECO:0007829" key="21">
    <source>
        <dbReference type="PDB" id="9F5B"/>
    </source>
</evidence>
<name>LDB1_HUMAN</name>
<comment type="function">
    <text evidence="1">Binds to the LIM domain of a wide variety of LIM domain-containing transcription factors. May regulate the transcriptional activity of LIM-containing proteins by determining specific partner interactions. Plays a role in the development of interneurons and motor neurons in cooperation with LHX3 and ISL1. Acts synergistically with LHX1/LIM1 in axis formation and activation of gene expression. Acts with LMO2 in the regulation of red blood cell development, maintaining erythroid precursors in an immature state.</text>
</comment>
<comment type="subunit">
    <text evidence="1 6 7">Interacts with ESR1 (PubMed:19117995). Forms homodimers and heterodimers. Interacts with and activates LHX1/LIM1. Interacts with the LIM domains of ISL1 and LMO2. Can assemble in a complex with LMO2 and TAL1/SCL but does not interact with TAL1/SCL directly. Strongly interacts with the LIM2 domain of LMX1A and more weakly with the LIM1 domain. Homodimerization is not required for, and does not effect, LMX1A-binding. Component of a nuclear TAL-1 complex composed at least of CBFA2T3, LDB1, TAL1 and TCF3. Interacts with LHX6 and LHX9. At neuronal promoters, forms a complex with LHX3 involved in the specification of interneurons, in motor neurons, it is displaced by ISL1 to form a ternary complex in which ISL1 contacts both LHX3 and LDB1. Interacts with SLK; leading to negatively regulate SLK kinase activity (By similarity). Interacts with YWHAZ. Interacts with PRDM1/BLIMP1 (PubMed:32417234). Interacts with LMO4. Interacts with RLIM/RNF12; the interaction inhibits the ubiquitination of LMO proteins (By similarity).</text>
</comment>
<comment type="interaction">
    <interactant intactId="EBI-677177">
        <id>Q86U70</id>
    </interactant>
    <interactant intactId="EBI-12179869">
        <id>P50458</id>
        <label>LHX2</label>
    </interactant>
    <organismsDiffer>false</organismsDiffer>
    <experiments>3</experiments>
</comment>
<comment type="interaction">
    <interactant intactId="EBI-677177">
        <id>Q86U70</id>
    </interactant>
    <interactant intactId="EBI-10258746">
        <id>Q9UPM6</id>
        <label>LHX6</label>
    </interactant>
    <organismsDiffer>false</organismsDiffer>
    <experiments>7</experiments>
</comment>
<comment type="interaction">
    <interactant intactId="EBI-677177">
        <id>Q86U70</id>
    </interactant>
    <interactant intactId="EBI-8474075">
        <id>Q68G74</id>
        <label>LHX8</label>
    </interactant>
    <organismsDiffer>false</organismsDiffer>
    <experiments>5</experiments>
</comment>
<comment type="interaction">
    <interactant intactId="EBI-677177">
        <id>Q86U70</id>
    </interactant>
    <interactant intactId="EBI-8639312">
        <id>P25800</id>
        <label>LMO1</label>
    </interactant>
    <organismsDiffer>false</organismsDiffer>
    <experiments>7</experiments>
</comment>
<comment type="interaction">
    <interactant intactId="EBI-677177">
        <id>Q86U70</id>
    </interactant>
    <interactant intactId="EBI-739696">
        <id>P25791</id>
        <label>LMO2</label>
    </interactant>
    <organismsDiffer>false</organismsDiffer>
    <experiments>9</experiments>
</comment>
<comment type="interaction">
    <interactant intactId="EBI-677177">
        <id>Q86U70</id>
    </interactant>
    <interactant intactId="EBI-742259">
        <id>Q8TAP4</id>
        <label>LMO3</label>
    </interactant>
    <organismsDiffer>false</organismsDiffer>
    <experiments>4</experiments>
</comment>
<comment type="interaction">
    <interactant intactId="EBI-677177">
        <id>Q86U70</id>
    </interactant>
    <interactant intactId="EBI-2798728">
        <id>P61968</id>
        <label>LMO4</label>
    </interactant>
    <organismsDiffer>false</organismsDiffer>
    <experiments>6</experiments>
</comment>
<comment type="interaction">
    <interactant intactId="EBI-677177">
        <id>Q86U70</id>
    </interactant>
    <interactant intactId="EBI-296386">
        <id>O60663</id>
        <label>LMX1B</label>
    </interactant>
    <organismsDiffer>false</organismsDiffer>
    <experiments>3</experiments>
</comment>
<comment type="interaction">
    <interactant intactId="EBI-677177">
        <id>Q86U70</id>
    </interactant>
    <interactant intactId="EBI-10258690">
        <id>O60663-2</id>
        <label>LMX1B</label>
    </interactant>
    <organismsDiffer>false</organismsDiffer>
    <experiments>3</experiments>
</comment>
<comment type="interaction">
    <interactant intactId="EBI-677177">
        <id>Q86U70</id>
    </interactant>
    <interactant intactId="EBI-748077">
        <id>P81877</id>
        <label>SSBP2</label>
    </interactant>
    <organismsDiffer>false</organismsDiffer>
    <experiments>3</experiments>
</comment>
<comment type="interaction">
    <interactant intactId="EBI-677177">
        <id>Q86U70</id>
    </interactant>
    <interactant intactId="EBI-2902395">
        <id>Q9BWW4</id>
        <label>SSBP3</label>
    </interactant>
    <organismsDiffer>false</organismsDiffer>
    <experiments>6</experiments>
</comment>
<comment type="interaction">
    <interactant intactId="EBI-677177">
        <id>Q86U70</id>
    </interactant>
    <interactant intactId="EBI-744719">
        <id>Q9BWG4</id>
        <label>SSBP4</label>
    </interactant>
    <organismsDiffer>false</organismsDiffer>
    <experiments>3</experiments>
</comment>
<comment type="interaction">
    <interactant intactId="EBI-677177">
        <id>Q86U70</id>
    </interactant>
    <interactant intactId="EBI-2682386">
        <id>Q96PV0</id>
        <label>SYNGAP1</label>
    </interactant>
    <organismsDiffer>false</organismsDiffer>
    <experiments>9</experiments>
</comment>
<comment type="interaction">
    <interactant intactId="EBI-11979761">
        <id>Q86U70-2</id>
    </interactant>
    <interactant intactId="EBI-466029">
        <id>P42858</id>
        <label>HTT</label>
    </interactant>
    <organismsDiffer>false</organismsDiffer>
    <experiments>3</experiments>
</comment>
<comment type="interaction">
    <interactant intactId="EBI-11979761">
        <id>Q86U70-2</id>
    </interactant>
    <interactant intactId="EBI-766127">
        <id>Q9BXS1</id>
        <label>IDI2</label>
    </interactant>
    <organismsDiffer>false</organismsDiffer>
    <experiments>4</experiments>
</comment>
<comment type="interaction">
    <interactant intactId="EBI-11979761">
        <id>Q86U70-2</id>
    </interactant>
    <interactant intactId="EBI-3906896">
        <id>P61371</id>
        <label>ISL1</label>
    </interactant>
    <organismsDiffer>false</organismsDiffer>
    <experiments>7</experiments>
</comment>
<comment type="interaction">
    <interactant intactId="EBI-11979761">
        <id>Q86U70-2</id>
    </interactant>
    <interactant intactId="EBI-18560216">
        <id>Q96A47</id>
        <label>ISL2</label>
    </interactant>
    <organismsDiffer>false</organismsDiffer>
    <experiments>3</experiments>
</comment>
<comment type="interaction">
    <interactant intactId="EBI-11979761">
        <id>Q86U70-2</id>
    </interactant>
    <interactant intactId="EBI-11990598">
        <id>P48742</id>
        <label>LHX1</label>
    </interactant>
    <organismsDiffer>false</organismsDiffer>
    <experiments>3</experiments>
</comment>
<comment type="interaction">
    <interactant intactId="EBI-11979761">
        <id>Q86U70-2</id>
    </interactant>
    <interactant intactId="EBI-12179869">
        <id>P50458</id>
        <label>LHX2</label>
    </interactant>
    <organismsDiffer>false</organismsDiffer>
    <experiments>3</experiments>
</comment>
<comment type="interaction">
    <interactant intactId="EBI-11979761">
        <id>Q86U70-2</id>
    </interactant>
    <interactant intactId="EBI-12039345">
        <id>Q9UBR4-2</id>
        <label>LHX3</label>
    </interactant>
    <organismsDiffer>false</organismsDiffer>
    <experiments>5</experiments>
</comment>
<comment type="interaction">
    <interactant intactId="EBI-11979761">
        <id>Q86U70-2</id>
    </interactant>
    <interactant intactId="EBI-2865388">
        <id>Q969G2</id>
        <label>LHX4</label>
    </interactant>
    <organismsDiffer>false</organismsDiffer>
    <experiments>4</experiments>
</comment>
<comment type="interaction">
    <interactant intactId="EBI-11979761">
        <id>Q86U70-2</id>
    </interactant>
    <interactant intactId="EBI-10258746">
        <id>Q9UPM6</id>
        <label>LHX6</label>
    </interactant>
    <organismsDiffer>false</organismsDiffer>
    <experiments>5</experiments>
</comment>
<comment type="interaction">
    <interactant intactId="EBI-11979761">
        <id>Q86U70-2</id>
    </interactant>
    <interactant intactId="EBI-8474075">
        <id>Q68G74</id>
        <label>LHX8</label>
    </interactant>
    <organismsDiffer>false</organismsDiffer>
    <experiments>6</experiments>
</comment>
<comment type="interaction">
    <interactant intactId="EBI-11979761">
        <id>Q86U70-2</id>
    </interactant>
    <interactant intactId="EBI-10175218">
        <id>Q9NQ69</id>
        <label>LHX9</label>
    </interactant>
    <organismsDiffer>false</organismsDiffer>
    <experiments>3</experiments>
</comment>
<comment type="interaction">
    <interactant intactId="EBI-11979761">
        <id>Q86U70-2</id>
    </interactant>
    <interactant intactId="EBI-8639312">
        <id>P25800</id>
        <label>LMO1</label>
    </interactant>
    <organismsDiffer>false</organismsDiffer>
    <experiments>6</experiments>
</comment>
<comment type="interaction">
    <interactant intactId="EBI-11979761">
        <id>Q86U70-2</id>
    </interactant>
    <interactant intactId="EBI-11959475">
        <id>P25791-3</id>
        <label>LMO2</label>
    </interactant>
    <organismsDiffer>false</organismsDiffer>
    <experiments>7</experiments>
</comment>
<comment type="interaction">
    <interactant intactId="EBI-11979761">
        <id>Q86U70-2</id>
    </interactant>
    <interactant intactId="EBI-11742507">
        <id>Q8TAP4-4</id>
        <label>LMO3</label>
    </interactant>
    <organismsDiffer>false</organismsDiffer>
    <experiments>6</experiments>
</comment>
<comment type="interaction">
    <interactant intactId="EBI-11979761">
        <id>Q86U70-2</id>
    </interactant>
    <interactant intactId="EBI-2798728">
        <id>P61968</id>
        <label>LMO4</label>
    </interactant>
    <organismsDiffer>false</organismsDiffer>
    <experiments>8</experiments>
</comment>
<comment type="interaction">
    <interactant intactId="EBI-11979761">
        <id>Q86U70-2</id>
    </interactant>
    <interactant intactId="EBI-10258690">
        <id>O60663-2</id>
        <label>LMX1B</label>
    </interactant>
    <organismsDiffer>false</organismsDiffer>
    <experiments>4</experiments>
</comment>
<comment type="interaction">
    <interactant intactId="EBI-11979761">
        <id>Q86U70-2</id>
    </interactant>
    <interactant intactId="EBI-2902395">
        <id>Q9BWW4</id>
        <label>SSBP3</label>
    </interactant>
    <organismsDiffer>false</organismsDiffer>
    <experiments>5</experiments>
</comment>
<comment type="interaction">
    <interactant intactId="EBI-11979761">
        <id>Q86U70-2</id>
    </interactant>
    <interactant intactId="EBI-744719">
        <id>Q9BWG4</id>
        <label>SSBP4</label>
    </interactant>
    <organismsDiffer>false</organismsDiffer>
    <experiments>4</experiments>
</comment>
<comment type="subcellular location">
    <subcellularLocation>
        <location evidence="1">Nucleus</location>
    </subcellularLocation>
    <text evidence="1">Colocalizes with SLK at leading edges.</text>
</comment>
<comment type="alternative products">
    <event type="alternative splicing"/>
    <isoform>
        <id>Q86U70-1</id>
        <name>1</name>
        <sequence type="displayed"/>
    </isoform>
    <isoform>
        <id>Q86U70-3</id>
        <name>2</name>
        <name>b</name>
        <sequence type="described" ref="VSP_027830 VSP_027831 VSP_027832"/>
    </isoform>
    <isoform>
        <id>Q86U70-2</id>
        <name>3</name>
        <name>a</name>
        <sequence type="described" ref="VSP_027830"/>
    </isoform>
</comment>
<comment type="tissue specificity">
    <text evidence="4">Expressed in a wide range of adult tissues including brain, heart, skeletal muscle, colon, thymus, spleen, kidney, liver, small intestine, lung and peripheral blood leukocytes.</text>
</comment>
<comment type="domain">
    <text evidence="1">The dimerization domain is located in the N-terminus.</text>
</comment>
<comment type="PTM">
    <text evidence="1">Ubiquitinated by RLIM/RNF12, leading to its degradation by the proteasome.</text>
</comment>
<comment type="miscellaneous">
    <text>Acts as a negative coregulator of ESR1-mediated transcription in breast cancer cells.</text>
</comment>
<comment type="miscellaneous">
    <molecule>Isoform 2</molecule>
    <text evidence="15">Due to intron retention. Lacks LIM-binding domain.</text>
</comment>
<comment type="similarity">
    <text evidence="15">Belongs to the LDB family.</text>
</comment>
<comment type="sequence caution" evidence="15">
    <conflict type="erroneous initiation">
        <sequence resource="EMBL-CDS" id="CAB45409"/>
    </conflict>
    <text>Extended N-terminus.</text>
</comment>
<comment type="online information" name="Atlas of Genetics and Cytogenetics in Oncology and Haematology">
    <link uri="https://atlasgeneticsoncology.org/gene/41135/LDB1"/>
</comment>
<dbReference type="EMBL" id="AF068652">
    <property type="protein sequence ID" value="AAC77818.1"/>
    <property type="molecule type" value="mRNA"/>
</dbReference>
<dbReference type="EMBL" id="AJ243098">
    <property type="protein sequence ID" value="CAB45409.1"/>
    <property type="status" value="ALT_INIT"/>
    <property type="molecule type" value="Genomic_DNA"/>
</dbReference>
<dbReference type="EMBL" id="AB016485">
    <property type="protein sequence ID" value="BAA31991.1"/>
    <property type="molecule type" value="mRNA"/>
</dbReference>
<dbReference type="EMBL" id="AB250384">
    <property type="protein sequence ID" value="BAE95402.1"/>
    <property type="molecule type" value="mRNA"/>
</dbReference>
<dbReference type="EMBL" id="AF064491">
    <property type="protein sequence ID" value="AAC28341.1"/>
    <property type="molecule type" value="mRNA"/>
</dbReference>
<dbReference type="EMBL" id="BT007054">
    <property type="protein sequence ID" value="AAP35703.1"/>
    <property type="molecule type" value="mRNA"/>
</dbReference>
<dbReference type="EMBL" id="AK300588">
    <property type="protein sequence ID" value="BAG62286.1"/>
    <property type="molecule type" value="mRNA"/>
</dbReference>
<dbReference type="EMBL" id="AL500527">
    <property type="status" value="NOT_ANNOTATED_CDS"/>
    <property type="molecule type" value="Genomic_DNA"/>
</dbReference>
<dbReference type="EMBL" id="BC000482">
    <property type="protein sequence ID" value="AAH00482.1"/>
    <property type="molecule type" value="mRNA"/>
</dbReference>
<dbReference type="EMBL" id="BC009246">
    <property type="protein sequence ID" value="AAH09246.1"/>
    <property type="molecule type" value="mRNA"/>
</dbReference>
<dbReference type="CCDS" id="CCDS44472.1">
    <molecule id="Q86U70-1"/>
</dbReference>
<dbReference type="CCDS" id="CCDS7528.1">
    <molecule id="Q86U70-2"/>
</dbReference>
<dbReference type="RefSeq" id="NP_001106878.1">
    <molecule id="Q86U70-1"/>
    <property type="nucleotide sequence ID" value="NM_001113407.3"/>
</dbReference>
<dbReference type="RefSeq" id="NP_003884.1">
    <molecule id="Q86U70-2"/>
    <property type="nucleotide sequence ID" value="NM_003893.5"/>
</dbReference>
<dbReference type="RefSeq" id="XP_047281935.1">
    <molecule id="Q86U70-2"/>
    <property type="nucleotide sequence ID" value="XM_047425979.1"/>
</dbReference>
<dbReference type="RefSeq" id="XP_047281936.1">
    <molecule id="Q86U70-2"/>
    <property type="nucleotide sequence ID" value="XM_047425980.1"/>
</dbReference>
<dbReference type="RefSeq" id="XP_054223069.1">
    <molecule id="Q86U70-2"/>
    <property type="nucleotide sequence ID" value="XM_054367094.1"/>
</dbReference>
<dbReference type="RefSeq" id="XP_054223072.1">
    <molecule id="Q86U70-2"/>
    <property type="nucleotide sequence ID" value="XM_054367097.1"/>
</dbReference>
<dbReference type="PDB" id="2XJY">
    <property type="method" value="X-ray"/>
    <property type="resolution" value="2.40 A"/>
    <property type="chains" value="B=334-368"/>
</dbReference>
<dbReference type="PDB" id="2XJZ">
    <property type="method" value="X-ray"/>
    <property type="resolution" value="2.80 A"/>
    <property type="chains" value="I/J/K/L/M=334-368"/>
</dbReference>
<dbReference type="PDB" id="2YPA">
    <property type="method" value="X-ray"/>
    <property type="resolution" value="2.80 A"/>
    <property type="chains" value="D=336-375"/>
</dbReference>
<dbReference type="PDB" id="6TYD">
    <property type="method" value="X-ray"/>
    <property type="resolution" value="2.80 A"/>
    <property type="chains" value="V=56-285"/>
</dbReference>
<dbReference type="PDB" id="7OB5">
    <property type="method" value="X-ray"/>
    <property type="resolution" value="1.80 A"/>
    <property type="chains" value="P=401-411"/>
</dbReference>
<dbReference type="PDB" id="7OB8">
    <property type="method" value="X-ray"/>
    <property type="resolution" value="1.80 A"/>
    <property type="chains" value="B=401-411"/>
</dbReference>
<dbReference type="PDB" id="8HIB">
    <property type="method" value="X-ray"/>
    <property type="resolution" value="2.45 A"/>
    <property type="chains" value="V=56-285"/>
</dbReference>
<dbReference type="PDB" id="8SSU">
    <property type="method" value="X-ray"/>
    <property type="resolution" value="2.89 A"/>
    <property type="chains" value="A=231-294"/>
</dbReference>
<dbReference type="PDB" id="9F5B">
    <property type="method" value="X-ray"/>
    <property type="resolution" value="1.80 A"/>
    <property type="chains" value="A=336-375"/>
</dbReference>
<dbReference type="PDBsum" id="2XJY"/>
<dbReference type="PDBsum" id="2XJZ"/>
<dbReference type="PDBsum" id="2YPA"/>
<dbReference type="PDBsum" id="6TYD"/>
<dbReference type="PDBsum" id="7OB5"/>
<dbReference type="PDBsum" id="7OB8"/>
<dbReference type="PDBsum" id="8HIB"/>
<dbReference type="PDBsum" id="8SSU"/>
<dbReference type="PDBsum" id="9F5B"/>
<dbReference type="SMR" id="Q86U70"/>
<dbReference type="BioGRID" id="114384">
    <property type="interactions" value="100"/>
</dbReference>
<dbReference type="CORUM" id="Q86U70"/>
<dbReference type="DIP" id="DIP-31826N"/>
<dbReference type="FunCoup" id="Q86U70">
    <property type="interactions" value="2318"/>
</dbReference>
<dbReference type="IntAct" id="Q86U70">
    <property type="interactions" value="69"/>
</dbReference>
<dbReference type="MINT" id="Q86U70"/>
<dbReference type="STRING" id="9606.ENSP00000501277"/>
<dbReference type="GlyGen" id="Q86U70">
    <property type="glycosylation" value="4 sites, 1 O-linked glycan (3 sites)"/>
</dbReference>
<dbReference type="iPTMnet" id="Q86U70"/>
<dbReference type="PhosphoSitePlus" id="Q86U70"/>
<dbReference type="BioMuta" id="LDB1"/>
<dbReference type="DMDM" id="158518615"/>
<dbReference type="jPOST" id="Q86U70"/>
<dbReference type="MassIVE" id="Q86U70"/>
<dbReference type="PaxDb" id="9606-ENSP00000392466"/>
<dbReference type="PeptideAtlas" id="Q86U70"/>
<dbReference type="ProteomicsDB" id="69771">
    <molecule id="Q86U70-1"/>
</dbReference>
<dbReference type="ProteomicsDB" id="69772">
    <molecule id="Q86U70-2"/>
</dbReference>
<dbReference type="ProteomicsDB" id="69773">
    <molecule id="Q86U70-3"/>
</dbReference>
<dbReference type="Pumba" id="Q86U70"/>
<dbReference type="Antibodypedia" id="17969">
    <property type="antibodies" value="273 antibodies from 31 providers"/>
</dbReference>
<dbReference type="DNASU" id="8861"/>
<dbReference type="Ensembl" id="ENST00000361198.9">
    <molecule id="Q86U70-2"/>
    <property type="protein sequence ID" value="ENSP00000354616.5"/>
    <property type="gene ID" value="ENSG00000198728.11"/>
</dbReference>
<dbReference type="Ensembl" id="ENST00000673968.1">
    <molecule id="Q86U70-1"/>
    <property type="protein sequence ID" value="ENSP00000501277.1"/>
    <property type="gene ID" value="ENSG00000198728.11"/>
</dbReference>
<dbReference type="GeneID" id="8861"/>
<dbReference type="KEGG" id="hsa:8861"/>
<dbReference type="MANE-Select" id="ENST00000673968.1">
    <property type="protein sequence ID" value="ENSP00000501277.1"/>
    <property type="RefSeq nucleotide sequence ID" value="NM_001113407.3"/>
    <property type="RefSeq protein sequence ID" value="NP_001106878.1"/>
</dbReference>
<dbReference type="UCSC" id="uc001kuk.6">
    <molecule id="Q86U70-1"/>
    <property type="organism name" value="human"/>
</dbReference>
<dbReference type="AGR" id="HGNC:6532"/>
<dbReference type="CTD" id="8861"/>
<dbReference type="DisGeNET" id="8861"/>
<dbReference type="GeneCards" id="LDB1"/>
<dbReference type="HGNC" id="HGNC:6532">
    <property type="gene designation" value="LDB1"/>
</dbReference>
<dbReference type="HPA" id="ENSG00000198728">
    <property type="expression patterns" value="Low tissue specificity"/>
</dbReference>
<dbReference type="MIM" id="603451">
    <property type="type" value="gene"/>
</dbReference>
<dbReference type="neXtProt" id="NX_Q86U70"/>
<dbReference type="OpenTargets" id="ENSG00000198728"/>
<dbReference type="PharmGKB" id="PA30316"/>
<dbReference type="VEuPathDB" id="HostDB:ENSG00000198728"/>
<dbReference type="eggNOG" id="KOG2181">
    <property type="taxonomic scope" value="Eukaryota"/>
</dbReference>
<dbReference type="GeneTree" id="ENSGT00390000005639"/>
<dbReference type="HOGENOM" id="CLU_032597_0_0_1"/>
<dbReference type="InParanoid" id="Q86U70"/>
<dbReference type="OMA" id="KMSVGCA"/>
<dbReference type="OrthoDB" id="774557at2759"/>
<dbReference type="PAN-GO" id="Q86U70">
    <property type="GO annotations" value="6 GO annotations based on evolutionary models"/>
</dbReference>
<dbReference type="PhylomeDB" id="Q86U70"/>
<dbReference type="TreeFam" id="TF319923"/>
<dbReference type="PathwayCommons" id="Q86U70"/>
<dbReference type="Reactome" id="R-HSA-8939236">
    <property type="pathway name" value="RUNX1 regulates transcription of genes involved in differentiation of HSCs"/>
</dbReference>
<dbReference type="Reactome" id="R-HSA-9010553">
    <property type="pathway name" value="Regulation of expression of SLITs and ROBOs"/>
</dbReference>
<dbReference type="Reactome" id="R-HSA-9733709">
    <property type="pathway name" value="Cardiogenesis"/>
</dbReference>
<dbReference type="Reactome" id="R-HSA-9752946">
    <property type="pathway name" value="Expression and translocation of olfactory receptors"/>
</dbReference>
<dbReference type="SignaLink" id="Q86U70"/>
<dbReference type="SIGNOR" id="Q86U70"/>
<dbReference type="BioGRID-ORCS" id="8861">
    <property type="hits" value="120 hits in 1188 CRISPR screens"/>
</dbReference>
<dbReference type="ChiTaRS" id="LDB1">
    <property type="organism name" value="human"/>
</dbReference>
<dbReference type="EvolutionaryTrace" id="Q86U70"/>
<dbReference type="GeneWiki" id="LDB1"/>
<dbReference type="GenomeRNAi" id="8861"/>
<dbReference type="Pharos" id="Q86U70">
    <property type="development level" value="Tbio"/>
</dbReference>
<dbReference type="PRO" id="PR:Q86U70"/>
<dbReference type="Proteomes" id="UP000005640">
    <property type="component" value="Chromosome 10"/>
</dbReference>
<dbReference type="RNAct" id="Q86U70">
    <property type="molecule type" value="protein"/>
</dbReference>
<dbReference type="Bgee" id="ENSG00000198728">
    <property type="expression patterns" value="Expressed in right uterine tube and 153 other cell types or tissues"/>
</dbReference>
<dbReference type="ExpressionAtlas" id="Q86U70">
    <property type="expression patterns" value="baseline and differential"/>
</dbReference>
<dbReference type="GO" id="GO:1990907">
    <property type="term" value="C:beta-catenin-TCF complex"/>
    <property type="evidence" value="ECO:0000314"/>
    <property type="project" value="FlyBase"/>
</dbReference>
<dbReference type="GO" id="GO:0031252">
    <property type="term" value="C:cell leading edge"/>
    <property type="evidence" value="ECO:0000250"/>
    <property type="project" value="UniProtKB"/>
</dbReference>
<dbReference type="GO" id="GO:0000785">
    <property type="term" value="C:chromatin"/>
    <property type="evidence" value="ECO:0000314"/>
    <property type="project" value="BHF-UCL"/>
</dbReference>
<dbReference type="GO" id="GO:0005654">
    <property type="term" value="C:nucleoplasm"/>
    <property type="evidence" value="ECO:0000304"/>
    <property type="project" value="Reactome"/>
</dbReference>
<dbReference type="GO" id="GO:0005634">
    <property type="term" value="C:nucleus"/>
    <property type="evidence" value="ECO:0000250"/>
    <property type="project" value="UniProtKB"/>
</dbReference>
<dbReference type="GO" id="GO:0032991">
    <property type="term" value="C:protein-containing complex"/>
    <property type="evidence" value="ECO:0000250"/>
    <property type="project" value="UniProtKB"/>
</dbReference>
<dbReference type="GO" id="GO:0005667">
    <property type="term" value="C:transcription regulator complex"/>
    <property type="evidence" value="ECO:0000314"/>
    <property type="project" value="BHF-UCL"/>
</dbReference>
<dbReference type="GO" id="GO:0003682">
    <property type="term" value="F:chromatin binding"/>
    <property type="evidence" value="ECO:0007669"/>
    <property type="project" value="Ensembl"/>
</dbReference>
<dbReference type="GO" id="GO:0003677">
    <property type="term" value="F:DNA binding"/>
    <property type="evidence" value="ECO:0007669"/>
    <property type="project" value="Ensembl"/>
</dbReference>
<dbReference type="GO" id="GO:0140297">
    <property type="term" value="F:DNA-binding transcription factor binding"/>
    <property type="evidence" value="ECO:0000353"/>
    <property type="project" value="UniProtKB"/>
</dbReference>
<dbReference type="GO" id="GO:0019899">
    <property type="term" value="F:enzyme binding"/>
    <property type="evidence" value="ECO:0000353"/>
    <property type="project" value="UniProtKB"/>
</dbReference>
<dbReference type="GO" id="GO:0030274">
    <property type="term" value="F:LIM domain binding"/>
    <property type="evidence" value="ECO:0000353"/>
    <property type="project" value="UniProtKB"/>
</dbReference>
<dbReference type="GO" id="GO:0042803">
    <property type="term" value="F:protein homodimerization activity"/>
    <property type="evidence" value="ECO:0000250"/>
    <property type="project" value="UniProtKB"/>
</dbReference>
<dbReference type="GO" id="GO:0061629">
    <property type="term" value="F:RNA polymerase II-specific DNA-binding transcription factor binding"/>
    <property type="evidence" value="ECO:0000353"/>
    <property type="project" value="BHF-UCL"/>
</dbReference>
<dbReference type="GO" id="GO:0003713">
    <property type="term" value="F:transcription coactivator activity"/>
    <property type="evidence" value="ECO:0007669"/>
    <property type="project" value="Ensembl"/>
</dbReference>
<dbReference type="GO" id="GO:0003712">
    <property type="term" value="F:transcription coregulator activity"/>
    <property type="evidence" value="ECO:0000318"/>
    <property type="project" value="GO_Central"/>
</dbReference>
<dbReference type="GO" id="GO:0009948">
    <property type="term" value="P:anterior/posterior axis specification"/>
    <property type="evidence" value="ECO:0007669"/>
    <property type="project" value="Ensembl"/>
</dbReference>
<dbReference type="GO" id="GO:0007155">
    <property type="term" value="P:cell adhesion"/>
    <property type="evidence" value="ECO:0007669"/>
    <property type="project" value="Ensembl"/>
</dbReference>
<dbReference type="GO" id="GO:0022607">
    <property type="term" value="P:cellular component assembly"/>
    <property type="evidence" value="ECO:0007669"/>
    <property type="project" value="Ensembl"/>
</dbReference>
<dbReference type="GO" id="GO:0021702">
    <property type="term" value="P:cerebellar Purkinje cell differentiation"/>
    <property type="evidence" value="ECO:0007669"/>
    <property type="project" value="Ensembl"/>
</dbReference>
<dbReference type="GO" id="GO:0010669">
    <property type="term" value="P:epithelial structure maintenance"/>
    <property type="evidence" value="ECO:0007669"/>
    <property type="project" value="Ensembl"/>
</dbReference>
<dbReference type="GO" id="GO:0001702">
    <property type="term" value="P:gastrulation with mouth forming second"/>
    <property type="evidence" value="ECO:0007669"/>
    <property type="project" value="Ensembl"/>
</dbReference>
<dbReference type="GO" id="GO:0001942">
    <property type="term" value="P:hair follicle development"/>
    <property type="evidence" value="ECO:0007669"/>
    <property type="project" value="Ensembl"/>
</dbReference>
<dbReference type="GO" id="GO:0045892">
    <property type="term" value="P:negative regulation of DNA-templated transcription"/>
    <property type="evidence" value="ECO:0000314"/>
    <property type="project" value="UniProtKB"/>
</dbReference>
<dbReference type="GO" id="GO:0045647">
    <property type="term" value="P:negative regulation of erythrocyte differentiation"/>
    <property type="evidence" value="ECO:0000250"/>
    <property type="project" value="UniProtKB"/>
</dbReference>
<dbReference type="GO" id="GO:0000122">
    <property type="term" value="P:negative regulation of transcription by RNA polymerase II"/>
    <property type="evidence" value="ECO:0000318"/>
    <property type="project" value="GO_Central"/>
</dbReference>
<dbReference type="GO" id="GO:0007399">
    <property type="term" value="P:nervous system development"/>
    <property type="evidence" value="ECO:0000318"/>
    <property type="project" value="GO_Central"/>
</dbReference>
<dbReference type="GO" id="GO:0030182">
    <property type="term" value="P:neuron differentiation"/>
    <property type="evidence" value="ECO:0000250"/>
    <property type="project" value="UniProtKB"/>
</dbReference>
<dbReference type="GO" id="GO:0045785">
    <property type="term" value="P:positive regulation of cell adhesion"/>
    <property type="evidence" value="ECO:0007669"/>
    <property type="project" value="Ensembl"/>
</dbReference>
<dbReference type="GO" id="GO:0046985">
    <property type="term" value="P:positive regulation of hemoglobin biosynthetic process"/>
    <property type="evidence" value="ECO:0000250"/>
    <property type="project" value="BHF-UCL"/>
</dbReference>
<dbReference type="GO" id="GO:0045944">
    <property type="term" value="P:positive regulation of transcription by RNA polymerase II"/>
    <property type="evidence" value="ECO:0000315"/>
    <property type="project" value="BHF-UCL"/>
</dbReference>
<dbReference type="GO" id="GO:0032968">
    <property type="term" value="P:positive regulation of transcription elongation by RNA polymerase II"/>
    <property type="evidence" value="ECO:0000250"/>
    <property type="project" value="BHF-UCL"/>
</dbReference>
<dbReference type="GO" id="GO:0030334">
    <property type="term" value="P:regulation of cell migration"/>
    <property type="evidence" value="ECO:0000250"/>
    <property type="project" value="UniProtKB"/>
</dbReference>
<dbReference type="GO" id="GO:0051893">
    <property type="term" value="P:regulation of focal adhesion assembly"/>
    <property type="evidence" value="ECO:0000250"/>
    <property type="project" value="UniProtKB"/>
</dbReference>
<dbReference type="GO" id="GO:0043549">
    <property type="term" value="P:regulation of kinase activity"/>
    <property type="evidence" value="ECO:0000250"/>
    <property type="project" value="UniProtKB"/>
</dbReference>
<dbReference type="GO" id="GO:0035019">
    <property type="term" value="P:somatic stem cell population maintenance"/>
    <property type="evidence" value="ECO:0007669"/>
    <property type="project" value="Ensembl"/>
</dbReference>
<dbReference type="GO" id="GO:0006366">
    <property type="term" value="P:transcription by RNA polymerase II"/>
    <property type="evidence" value="ECO:0007669"/>
    <property type="project" value="Ensembl"/>
</dbReference>
<dbReference type="GO" id="GO:0000972">
    <property type="term" value="P:transcription-dependent tethering of RNA polymerase II gene DNA at nuclear periphery"/>
    <property type="evidence" value="ECO:0000250"/>
    <property type="project" value="BHF-UCL"/>
</dbReference>
<dbReference type="GO" id="GO:0016055">
    <property type="term" value="P:Wnt signaling pathway"/>
    <property type="evidence" value="ECO:0007669"/>
    <property type="project" value="Ensembl"/>
</dbReference>
<dbReference type="FunFam" id="2.10.110.10:FF:000063">
    <property type="entry name" value="LIM domain-binding protein 2 isoform X2"/>
    <property type="match status" value="1"/>
</dbReference>
<dbReference type="Gene3D" id="2.10.110.10">
    <property type="entry name" value="Cysteine Rich Protein"/>
    <property type="match status" value="1"/>
</dbReference>
<dbReference type="IDEAL" id="IID00282"/>
<dbReference type="InterPro" id="IPR041363">
    <property type="entry name" value="LID"/>
</dbReference>
<dbReference type="InterPro" id="IPR029005">
    <property type="entry name" value="LIM-bd/SEUSS"/>
</dbReference>
<dbReference type="PANTHER" id="PTHR10378">
    <property type="entry name" value="LIM DOMAIN-BINDING PROTEIN"/>
    <property type="match status" value="1"/>
</dbReference>
<dbReference type="Pfam" id="PF17916">
    <property type="entry name" value="LID"/>
    <property type="match status" value="1"/>
</dbReference>
<dbReference type="Pfam" id="PF01803">
    <property type="entry name" value="LIM_bind"/>
    <property type="match status" value="1"/>
</dbReference>
<dbReference type="PROSITE" id="PS51957">
    <property type="entry name" value="LID"/>
    <property type="match status" value="1"/>
</dbReference>
<accession>Q86U70</accession>
<accession>B4DUC4</accession>
<accession>O75479</accession>
<accession>O96010</accession>
<accession>Q1EQX1</accession>
<accession>Q9UGM4</accession>
<organism>
    <name type="scientific">Homo sapiens</name>
    <name type="common">Human</name>
    <dbReference type="NCBI Taxonomy" id="9606"/>
    <lineage>
        <taxon>Eukaryota</taxon>
        <taxon>Metazoa</taxon>
        <taxon>Chordata</taxon>
        <taxon>Craniata</taxon>
        <taxon>Vertebrata</taxon>
        <taxon>Euteleostomi</taxon>
        <taxon>Mammalia</taxon>
        <taxon>Eutheria</taxon>
        <taxon>Euarchontoglires</taxon>
        <taxon>Primates</taxon>
        <taxon>Haplorrhini</taxon>
        <taxon>Catarrhini</taxon>
        <taxon>Hominidae</taxon>
        <taxon>Homo</taxon>
    </lineage>
</organism>
<gene>
    <name type="primary">LDB1</name>
    <name type="synonym">CLIM2</name>
</gene>
<sequence>MSVGCACPGCSSKSFKLYSPKEPPNGNAFPPFHPGTMLDRDVGPTPMYPPTYLEPGIGRHTPYGNQTDYRIFELNKRLQNWTEECDNLWWDAFTTEFFEDDAMLTITFCLEDGPKRYTIGRTLIPRYFRSIFEGGATELYYVLKHPKEAFHSNFVSLDCDQGSMVTQHGKPMFTQVCVEGRLYLEFMFDDMMRIKTWHFSIRQHRELIPRSILAMHAQDPQMLDQLSKNITRCGLSNSTLNYLRLCVILEPMQELMSRHKTYSLSPRDCLKTCLFQKWQRMVAPPAEPTRQQPSKRRKRKMSGGSTMSSGGGNTNNSNSKKKSPASTFALSSQVPDVMVVGEPTLMGGEFGDEDERLITRLENTQFDAANGIDDEDSFNNSPALGANSPWNSKPPSSQESKSENPTSQASQ</sequence>
<feature type="initiator methionine" description="Removed" evidence="16">
    <location>
        <position position="1"/>
    </location>
</feature>
<feature type="chain" id="PRO_0000084384" description="LIM domain-binding protein 1">
    <location>
        <begin position="2"/>
        <end position="411"/>
    </location>
</feature>
<feature type="domain" description="LIM interaction domain (LID)" evidence="2">
    <location>
        <begin position="336"/>
        <end position="375"/>
    </location>
</feature>
<feature type="region of interest" description="Disordered" evidence="3">
    <location>
        <begin position="283"/>
        <end position="330"/>
    </location>
</feature>
<feature type="region of interest" description="Disordered" evidence="3">
    <location>
        <begin position="367"/>
        <end position="411"/>
    </location>
</feature>
<feature type="compositionally biased region" description="Low complexity" evidence="3">
    <location>
        <begin position="302"/>
        <end position="318"/>
    </location>
</feature>
<feature type="modified residue" description="N-acetylserine" evidence="16">
    <location>
        <position position="2"/>
    </location>
</feature>
<feature type="modified residue" description="Phosphothreonine" evidence="1">
    <location>
        <position position="61"/>
    </location>
</feature>
<feature type="modified residue" description="Phosphoserine" evidence="17">
    <location>
        <position position="265"/>
    </location>
</feature>
<feature type="modified residue" description="Phosphoserine" evidence="1">
    <location>
        <position position="302"/>
    </location>
</feature>
<feature type="splice variant" id="VSP_027830" description="In isoform 2 and isoform 3." evidence="8 9 10 11 12 13 14">
    <location>
        <begin position="1"/>
        <end position="36"/>
    </location>
</feature>
<feature type="splice variant" id="VSP_027831" description="In isoform 2." evidence="9 11">
    <original>DVMVVGEPTLMGGEFGD</original>
    <variation>VSISAFFSLLGCPTTHP</variation>
    <location>
        <begin position="336"/>
        <end position="352"/>
    </location>
</feature>
<feature type="splice variant" id="VSP_027832" description="In isoform 2." evidence="9 11">
    <location>
        <begin position="353"/>
        <end position="411"/>
    </location>
</feature>
<feature type="sequence variant" id="VAR_036366" description="In a colorectal cancer sample; somatic mutation; dbSNP:rs990101456." evidence="5">
    <original>R</original>
    <variation>Q</variation>
    <location>
        <position position="299"/>
    </location>
</feature>
<feature type="mutagenesis site" description="Abolishes interaction with ESR1." evidence="6">
    <original>LCVIL</original>
    <variation>ACVAA</variation>
    <location>
        <begin position="245"/>
        <end position="249"/>
    </location>
</feature>
<feature type="helix" evidence="20">
    <location>
        <begin position="67"/>
        <end position="78"/>
    </location>
</feature>
<feature type="helix" evidence="20">
    <location>
        <begin position="87"/>
        <end position="97"/>
    </location>
</feature>
<feature type="strand" evidence="20">
    <location>
        <begin position="98"/>
        <end position="108"/>
    </location>
</feature>
<feature type="strand" evidence="20">
    <location>
        <begin position="110"/>
        <end position="113"/>
    </location>
</feature>
<feature type="strand" evidence="20">
    <location>
        <begin position="115"/>
        <end position="120"/>
    </location>
</feature>
<feature type="helix" evidence="20">
    <location>
        <begin position="121"/>
        <end position="123"/>
    </location>
</feature>
<feature type="helix" evidence="20">
    <location>
        <begin position="124"/>
        <end position="133"/>
    </location>
</feature>
<feature type="strand" evidence="20">
    <location>
        <begin position="136"/>
        <end position="145"/>
    </location>
</feature>
<feature type="strand" evidence="20">
    <location>
        <begin position="147"/>
        <end position="150"/>
    </location>
</feature>
<feature type="strand" evidence="20">
    <location>
        <begin position="152"/>
        <end position="168"/>
    </location>
</feature>
<feature type="strand" evidence="20">
    <location>
        <begin position="170"/>
        <end position="172"/>
    </location>
</feature>
<feature type="strand" evidence="20">
    <location>
        <begin position="175"/>
        <end position="191"/>
    </location>
</feature>
<feature type="strand" evidence="20">
    <location>
        <begin position="194"/>
        <end position="207"/>
    </location>
</feature>
<feature type="helix" evidence="20">
    <location>
        <begin position="210"/>
        <end position="215"/>
    </location>
</feature>
<feature type="turn" evidence="20">
    <location>
        <begin position="216"/>
        <end position="218"/>
    </location>
</feature>
<feature type="helix" evidence="20">
    <location>
        <begin position="220"/>
        <end position="223"/>
    </location>
</feature>
<feature type="turn" evidence="20">
    <location>
        <begin position="224"/>
        <end position="227"/>
    </location>
</feature>
<feature type="strand" evidence="20">
    <location>
        <begin position="230"/>
        <end position="234"/>
    </location>
</feature>
<feature type="helix" evidence="20">
    <location>
        <begin position="237"/>
        <end position="249"/>
    </location>
</feature>
<feature type="helix" evidence="20">
    <location>
        <begin position="252"/>
        <end position="261"/>
    </location>
</feature>
<feature type="helix" evidence="20">
    <location>
        <begin position="266"/>
        <end position="279"/>
    </location>
</feature>
<feature type="strand" evidence="19">
    <location>
        <begin position="337"/>
        <end position="339"/>
    </location>
</feature>
<feature type="turn" evidence="18">
    <location>
        <begin position="346"/>
        <end position="349"/>
    </location>
</feature>
<feature type="strand" evidence="21">
    <location>
        <begin position="355"/>
        <end position="357"/>
    </location>
</feature>
<feature type="strand" evidence="21">
    <location>
        <begin position="359"/>
        <end position="362"/>
    </location>
</feature>
<reference key="1">
    <citation type="journal article" date="1998" name="Mamm. Genome">
        <title>Cloning and chromosomal localization of two novel human genes encoding LIM-domain binding factors CLIM1 and CLIM2/LDB1/NLI.</title>
        <authorList>
            <person name="Semina E.V."/>
            <person name="Altherr M.R."/>
            <person name="Murray J.C."/>
        </authorList>
    </citation>
    <scope>NUCLEOTIDE SEQUENCE [MRNA] (ISOFORM 3)</scope>
    <source>
        <tissue>Craniofacial</tissue>
    </source>
</reference>
<reference key="2">
    <citation type="journal article" date="1999" name="Cytogenet. Cell Genet.">
        <title>Genomic structure, alternative transcripts and chromosome location of the human LIM domain binding protein gene LDB1.</title>
        <authorList>
            <person name="Drechsler M."/>
            <person name="Schumacher V."/>
            <person name="Friedrich S."/>
            <person name="Wildhardt G."/>
            <person name="Giesler S."/>
            <person name="Schroth A."/>
            <person name="Bodem J."/>
            <person name="Royer-Pokora B."/>
        </authorList>
    </citation>
    <scope>NUCLEOTIDE SEQUENCE [GENOMIC DNA]</scope>
</reference>
<reference key="3">
    <citation type="journal article" date="1999" name="J. Hum. Genet.">
        <title>Isolation and chromosomal assignment of human genes encoding cofactor of LIM homeodomain proteins, CLIM1 and CLIM2.</title>
        <authorList>
            <person name="Ueki N."/>
            <person name="Seki N."/>
            <person name="Yano K."/>
            <person name="Ohira M."/>
            <person name="Saito T."/>
            <person name="Masuho Y."/>
            <person name="Muramatsu M."/>
        </authorList>
    </citation>
    <scope>NUCLEOTIDE SEQUENCE [MRNA] (ISOFORM 3)</scope>
    <source>
        <tissue>Brain</tissue>
    </source>
</reference>
<reference key="4">
    <citation type="journal article" date="2006" name="J. Biochem.">
        <title>Spliced isoforms of LIM-domain-binding protein (CLIM/NLI/Ldb) lacking the LIM-interaction domain.</title>
        <authorList>
            <person name="Tran Y.H."/>
            <person name="Xu Z."/>
            <person name="Kato A."/>
            <person name="Mistry A.C."/>
            <person name="Goya Y."/>
            <person name="Taira M."/>
            <person name="Brandt S.J."/>
            <person name="Hirose S."/>
        </authorList>
    </citation>
    <scope>NUCLEOTIDE SEQUENCE [MRNA] (ISOFORM 2)</scope>
    <scope>ALTERNATIVE SPLICING</scope>
    <scope>TISSUE SPECIFICITY</scope>
    <source>
        <tissue>Fetal brain</tissue>
    </source>
</reference>
<reference key="5">
    <citation type="submission" date="1998-05" db="EMBL/GenBank/DDBJ databases">
        <title>Cloning, characterization, and physical mapping of the human homologs of the mouse C-LIM gene.</title>
        <authorList>
            <person name="Phillips J.C."/>
            <person name="Goldman D.A."/>
            <person name="Wiggs J.L."/>
        </authorList>
    </citation>
    <scope>NUCLEOTIDE SEQUENCE [MRNA] (ISOFORM 3)</scope>
    <source>
        <tissue>Fetal brain</tissue>
    </source>
</reference>
<reference key="6">
    <citation type="submission" date="2003-05" db="EMBL/GenBank/DDBJ databases">
        <title>Cloning of human full-length CDSs in BD Creator(TM) system donor vector.</title>
        <authorList>
            <person name="Kalnine N."/>
            <person name="Chen X."/>
            <person name="Rolfs A."/>
            <person name="Halleck A."/>
            <person name="Hines L."/>
            <person name="Eisenstein S."/>
            <person name="Koundinya M."/>
            <person name="Raphael J."/>
            <person name="Moreira D."/>
            <person name="Kelley T."/>
            <person name="LaBaer J."/>
            <person name="Lin Y."/>
            <person name="Phelan M."/>
            <person name="Farmer A."/>
        </authorList>
    </citation>
    <scope>NUCLEOTIDE SEQUENCE [LARGE SCALE MRNA] (ISOFORM 3)</scope>
</reference>
<reference key="7">
    <citation type="journal article" date="2004" name="Nat. Genet.">
        <title>Complete sequencing and characterization of 21,243 full-length human cDNAs.</title>
        <authorList>
            <person name="Ota T."/>
            <person name="Suzuki Y."/>
            <person name="Nishikawa T."/>
            <person name="Otsuki T."/>
            <person name="Sugiyama T."/>
            <person name="Irie R."/>
            <person name="Wakamatsu A."/>
            <person name="Hayashi K."/>
            <person name="Sato H."/>
            <person name="Nagai K."/>
            <person name="Kimura K."/>
            <person name="Makita H."/>
            <person name="Sekine M."/>
            <person name="Obayashi M."/>
            <person name="Nishi T."/>
            <person name="Shibahara T."/>
            <person name="Tanaka T."/>
            <person name="Ishii S."/>
            <person name="Yamamoto J."/>
            <person name="Saito K."/>
            <person name="Kawai Y."/>
            <person name="Isono Y."/>
            <person name="Nakamura Y."/>
            <person name="Nagahari K."/>
            <person name="Murakami K."/>
            <person name="Yasuda T."/>
            <person name="Iwayanagi T."/>
            <person name="Wagatsuma M."/>
            <person name="Shiratori A."/>
            <person name="Sudo H."/>
            <person name="Hosoiri T."/>
            <person name="Kaku Y."/>
            <person name="Kodaira H."/>
            <person name="Kondo H."/>
            <person name="Sugawara M."/>
            <person name="Takahashi M."/>
            <person name="Kanda K."/>
            <person name="Yokoi T."/>
            <person name="Furuya T."/>
            <person name="Kikkawa E."/>
            <person name="Omura Y."/>
            <person name="Abe K."/>
            <person name="Kamihara K."/>
            <person name="Katsuta N."/>
            <person name="Sato K."/>
            <person name="Tanikawa M."/>
            <person name="Yamazaki M."/>
            <person name="Ninomiya K."/>
            <person name="Ishibashi T."/>
            <person name="Yamashita H."/>
            <person name="Murakawa K."/>
            <person name="Fujimori K."/>
            <person name="Tanai H."/>
            <person name="Kimata M."/>
            <person name="Watanabe M."/>
            <person name="Hiraoka S."/>
            <person name="Chiba Y."/>
            <person name="Ishida S."/>
            <person name="Ono Y."/>
            <person name="Takiguchi S."/>
            <person name="Watanabe S."/>
            <person name="Yosida M."/>
            <person name="Hotuta T."/>
            <person name="Kusano J."/>
            <person name="Kanehori K."/>
            <person name="Takahashi-Fujii A."/>
            <person name="Hara H."/>
            <person name="Tanase T.-O."/>
            <person name="Nomura Y."/>
            <person name="Togiya S."/>
            <person name="Komai F."/>
            <person name="Hara R."/>
            <person name="Takeuchi K."/>
            <person name="Arita M."/>
            <person name="Imose N."/>
            <person name="Musashino K."/>
            <person name="Yuuki H."/>
            <person name="Oshima A."/>
            <person name="Sasaki N."/>
            <person name="Aotsuka S."/>
            <person name="Yoshikawa Y."/>
            <person name="Matsunawa H."/>
            <person name="Ichihara T."/>
            <person name="Shiohata N."/>
            <person name="Sano S."/>
            <person name="Moriya S."/>
            <person name="Momiyama H."/>
            <person name="Satoh N."/>
            <person name="Takami S."/>
            <person name="Terashima Y."/>
            <person name="Suzuki O."/>
            <person name="Nakagawa S."/>
            <person name="Senoh A."/>
            <person name="Mizoguchi H."/>
            <person name="Goto Y."/>
            <person name="Shimizu F."/>
            <person name="Wakebe H."/>
            <person name="Hishigaki H."/>
            <person name="Watanabe T."/>
            <person name="Sugiyama A."/>
            <person name="Takemoto M."/>
            <person name="Kawakami B."/>
            <person name="Yamazaki M."/>
            <person name="Watanabe K."/>
            <person name="Kumagai A."/>
            <person name="Itakura S."/>
            <person name="Fukuzumi Y."/>
            <person name="Fujimori Y."/>
            <person name="Komiyama M."/>
            <person name="Tashiro H."/>
            <person name="Tanigami A."/>
            <person name="Fujiwara T."/>
            <person name="Ono T."/>
            <person name="Yamada K."/>
            <person name="Fujii Y."/>
            <person name="Ozaki K."/>
            <person name="Hirao M."/>
            <person name="Ohmori Y."/>
            <person name="Kawabata A."/>
            <person name="Hikiji T."/>
            <person name="Kobatake N."/>
            <person name="Inagaki H."/>
            <person name="Ikema Y."/>
            <person name="Okamoto S."/>
            <person name="Okitani R."/>
            <person name="Kawakami T."/>
            <person name="Noguchi S."/>
            <person name="Itoh T."/>
            <person name="Shigeta K."/>
            <person name="Senba T."/>
            <person name="Matsumura K."/>
            <person name="Nakajima Y."/>
            <person name="Mizuno T."/>
            <person name="Morinaga M."/>
            <person name="Sasaki M."/>
            <person name="Togashi T."/>
            <person name="Oyama M."/>
            <person name="Hata H."/>
            <person name="Watanabe M."/>
            <person name="Komatsu T."/>
            <person name="Mizushima-Sugano J."/>
            <person name="Satoh T."/>
            <person name="Shirai Y."/>
            <person name="Takahashi Y."/>
            <person name="Nakagawa K."/>
            <person name="Okumura K."/>
            <person name="Nagase T."/>
            <person name="Nomura N."/>
            <person name="Kikuchi H."/>
            <person name="Masuho Y."/>
            <person name="Yamashita R."/>
            <person name="Nakai K."/>
            <person name="Yada T."/>
            <person name="Nakamura Y."/>
            <person name="Ohara O."/>
            <person name="Isogai T."/>
            <person name="Sugano S."/>
        </authorList>
    </citation>
    <scope>NUCLEOTIDE SEQUENCE [LARGE SCALE MRNA] (ISOFORM 2)</scope>
</reference>
<reference key="8">
    <citation type="journal article" date="2004" name="Nature">
        <title>The DNA sequence and comparative analysis of human chromosome 10.</title>
        <authorList>
            <person name="Deloukas P."/>
            <person name="Earthrowl M.E."/>
            <person name="Grafham D.V."/>
            <person name="Rubenfield M."/>
            <person name="French L."/>
            <person name="Steward C.A."/>
            <person name="Sims S.K."/>
            <person name="Jones M.C."/>
            <person name="Searle S."/>
            <person name="Scott C."/>
            <person name="Howe K."/>
            <person name="Hunt S.E."/>
            <person name="Andrews T.D."/>
            <person name="Gilbert J.G.R."/>
            <person name="Swarbreck D."/>
            <person name="Ashurst J.L."/>
            <person name="Taylor A."/>
            <person name="Battles J."/>
            <person name="Bird C.P."/>
            <person name="Ainscough R."/>
            <person name="Almeida J.P."/>
            <person name="Ashwell R.I.S."/>
            <person name="Ambrose K.D."/>
            <person name="Babbage A.K."/>
            <person name="Bagguley C.L."/>
            <person name="Bailey J."/>
            <person name="Banerjee R."/>
            <person name="Bates K."/>
            <person name="Beasley H."/>
            <person name="Bray-Allen S."/>
            <person name="Brown A.J."/>
            <person name="Brown J.Y."/>
            <person name="Burford D.C."/>
            <person name="Burrill W."/>
            <person name="Burton J."/>
            <person name="Cahill P."/>
            <person name="Camire D."/>
            <person name="Carter N.P."/>
            <person name="Chapman J.C."/>
            <person name="Clark S.Y."/>
            <person name="Clarke G."/>
            <person name="Clee C.M."/>
            <person name="Clegg S."/>
            <person name="Corby N."/>
            <person name="Coulson A."/>
            <person name="Dhami P."/>
            <person name="Dutta I."/>
            <person name="Dunn M."/>
            <person name="Faulkner L."/>
            <person name="Frankish A."/>
            <person name="Frankland J.A."/>
            <person name="Garner P."/>
            <person name="Garnett J."/>
            <person name="Gribble S."/>
            <person name="Griffiths C."/>
            <person name="Grocock R."/>
            <person name="Gustafson E."/>
            <person name="Hammond S."/>
            <person name="Harley J.L."/>
            <person name="Hart E."/>
            <person name="Heath P.D."/>
            <person name="Ho T.P."/>
            <person name="Hopkins B."/>
            <person name="Horne J."/>
            <person name="Howden P.J."/>
            <person name="Huckle E."/>
            <person name="Hynds C."/>
            <person name="Johnson C."/>
            <person name="Johnson D."/>
            <person name="Kana A."/>
            <person name="Kay M."/>
            <person name="Kimberley A.M."/>
            <person name="Kershaw J.K."/>
            <person name="Kokkinaki M."/>
            <person name="Laird G.K."/>
            <person name="Lawlor S."/>
            <person name="Lee H.M."/>
            <person name="Leongamornlert D.A."/>
            <person name="Laird G."/>
            <person name="Lloyd C."/>
            <person name="Lloyd D.M."/>
            <person name="Loveland J."/>
            <person name="Lovell J."/>
            <person name="McLaren S."/>
            <person name="McLay K.E."/>
            <person name="McMurray A."/>
            <person name="Mashreghi-Mohammadi M."/>
            <person name="Matthews L."/>
            <person name="Milne S."/>
            <person name="Nickerson T."/>
            <person name="Nguyen M."/>
            <person name="Overton-Larty E."/>
            <person name="Palmer S.A."/>
            <person name="Pearce A.V."/>
            <person name="Peck A.I."/>
            <person name="Pelan S."/>
            <person name="Phillimore B."/>
            <person name="Porter K."/>
            <person name="Rice C.M."/>
            <person name="Rogosin A."/>
            <person name="Ross M.T."/>
            <person name="Sarafidou T."/>
            <person name="Sehra H.K."/>
            <person name="Shownkeen R."/>
            <person name="Skuce C.D."/>
            <person name="Smith M."/>
            <person name="Standring L."/>
            <person name="Sycamore N."/>
            <person name="Tester J."/>
            <person name="Thorpe A."/>
            <person name="Torcasso W."/>
            <person name="Tracey A."/>
            <person name="Tromans A."/>
            <person name="Tsolas J."/>
            <person name="Wall M."/>
            <person name="Walsh J."/>
            <person name="Wang H."/>
            <person name="Weinstock K."/>
            <person name="West A.P."/>
            <person name="Willey D.L."/>
            <person name="Whitehead S.L."/>
            <person name="Wilming L."/>
            <person name="Wray P.W."/>
            <person name="Young L."/>
            <person name="Chen Y."/>
            <person name="Lovering R.C."/>
            <person name="Moschonas N.K."/>
            <person name="Siebert R."/>
            <person name="Fechtel K."/>
            <person name="Bentley D."/>
            <person name="Durbin R.M."/>
            <person name="Hubbard T."/>
            <person name="Doucette-Stamm L."/>
            <person name="Beck S."/>
            <person name="Smith D.R."/>
            <person name="Rogers J."/>
        </authorList>
    </citation>
    <scope>NUCLEOTIDE SEQUENCE [LARGE SCALE GENOMIC DNA]</scope>
</reference>
<reference key="9">
    <citation type="journal article" date="2004" name="Genome Res.">
        <title>The status, quality, and expansion of the NIH full-length cDNA project: the Mammalian Gene Collection (MGC).</title>
        <authorList>
            <consortium name="The MGC Project Team"/>
        </authorList>
    </citation>
    <scope>NUCLEOTIDE SEQUENCE [LARGE SCALE MRNA] (ISOFORM 3)</scope>
    <source>
        <tissue>Muscle</tissue>
    </source>
</reference>
<reference key="10">
    <citation type="journal article" date="2006" name="Mol. Cell. Proteomics">
        <title>Transgenic mouse proteomics identifies new 14-3-3-associated proteins involved in cytoskeletal rearrangements and cell signaling.</title>
        <authorList>
            <person name="Angrand P.O."/>
            <person name="Segura I."/>
            <person name="Voelkel P."/>
            <person name="Ghidelli S."/>
            <person name="Terry R."/>
            <person name="Brajenovic M."/>
            <person name="Vintersten K."/>
            <person name="Klein R."/>
            <person name="Superti-Furga G."/>
            <person name="Drewes G."/>
            <person name="Kuster B."/>
            <person name="Bouwmeester T."/>
            <person name="Acker-Palmer A."/>
        </authorList>
    </citation>
    <scope>INTERACTION WITH YWHAZ</scope>
</reference>
<reference key="11">
    <citation type="journal article" date="2009" name="Anal. Chem.">
        <title>Lys-N and trypsin cover complementary parts of the phosphoproteome in a refined SCX-based approach.</title>
        <authorList>
            <person name="Gauci S."/>
            <person name="Helbig A.O."/>
            <person name="Slijper M."/>
            <person name="Krijgsveld J."/>
            <person name="Heck A.J."/>
            <person name="Mohammed S."/>
        </authorList>
    </citation>
    <scope>ACETYLATION [LARGE SCALE ANALYSIS] AT SER-2</scope>
    <scope>CLEAVAGE OF INITIATOR METHIONINE [LARGE SCALE ANALYSIS]</scope>
    <scope>IDENTIFICATION BY MASS SPECTROMETRY [LARGE SCALE ANALYSIS]</scope>
</reference>
<reference key="12">
    <citation type="journal article" date="2009" name="Cancer Res.">
        <title>Regulation of estrogen-dependent transcription by the LIM cofactors CLIM and RLIM in breast cancer.</title>
        <authorList>
            <person name="Johnsen S.A."/>
            <person name="Guengoer C."/>
            <person name="Prenzel T."/>
            <person name="Riethdorf S."/>
            <person name="Riethdorf L."/>
            <person name="Taniguchi-Ishigaki N."/>
            <person name="Rau T."/>
            <person name="Tursun B."/>
            <person name="Furlow J.D."/>
            <person name="Sauter G."/>
            <person name="Scheffner M."/>
            <person name="Pantel K."/>
            <person name="Gannon F."/>
            <person name="Bach I."/>
        </authorList>
    </citation>
    <scope>INTERACTION WITH ESR1</scope>
    <scope>MUTAGENESIS OF 245-LEU--LEU-249</scope>
    <scope>MISCELLANEOUS</scope>
</reference>
<reference key="13">
    <citation type="journal article" date="2009" name="Sci. Signal.">
        <title>Quantitative phosphoproteomic analysis of T cell receptor signaling reveals system-wide modulation of protein-protein interactions.</title>
        <authorList>
            <person name="Mayya V."/>
            <person name="Lundgren D.H."/>
            <person name="Hwang S.-I."/>
            <person name="Rezaul K."/>
            <person name="Wu L."/>
            <person name="Eng J.K."/>
            <person name="Rodionov V."/>
            <person name="Han D.K."/>
        </authorList>
    </citation>
    <scope>IDENTIFICATION BY MASS SPECTROMETRY [LARGE SCALE ANALYSIS]</scope>
    <source>
        <tissue>Leukemic T-cell</tissue>
    </source>
</reference>
<reference key="14">
    <citation type="journal article" date="2011" name="Sci. Signal.">
        <title>System-wide temporal characterization of the proteome and phosphoproteome of human embryonic stem cell differentiation.</title>
        <authorList>
            <person name="Rigbolt K.T."/>
            <person name="Prokhorova T.A."/>
            <person name="Akimov V."/>
            <person name="Henningsen J."/>
            <person name="Johansen P.T."/>
            <person name="Kratchmarova I."/>
            <person name="Kassem M."/>
            <person name="Mann M."/>
            <person name="Olsen J.V."/>
            <person name="Blagoev B."/>
        </authorList>
    </citation>
    <scope>IDENTIFICATION BY MASS SPECTROMETRY [LARGE SCALE ANALYSIS]</scope>
</reference>
<reference key="15">
    <citation type="journal article" date="2013" name="J. Proteome Res.">
        <title>Toward a comprehensive characterization of a human cancer cell phosphoproteome.</title>
        <authorList>
            <person name="Zhou H."/>
            <person name="Di Palma S."/>
            <person name="Preisinger C."/>
            <person name="Peng M."/>
            <person name="Polat A.N."/>
            <person name="Heck A.J."/>
            <person name="Mohammed S."/>
        </authorList>
    </citation>
    <scope>PHOSPHORYLATION [LARGE SCALE ANALYSIS] AT SER-265</scope>
    <scope>IDENTIFICATION BY MASS SPECTROMETRY [LARGE SCALE ANALYSIS]</scope>
    <source>
        <tissue>Erythroleukemia</tissue>
    </source>
</reference>
<reference key="16">
    <citation type="journal article" date="2020" name="Biochim. Biophys. Acta">
        <title>LDB1 and the SWI/SNF complex participate in both transcriptional activation and repression by Caenorhabditis elegans BLIMP1/PRDM1.</title>
        <authorList>
            <person name="Fong H.T."/>
            <person name="Hagen T."/>
            <person name="Inoue T."/>
        </authorList>
    </citation>
    <scope>INTERACTION WITH PRDM1</scope>
</reference>
<reference key="17">
    <citation type="journal article" date="2011" name="Blood">
        <title>Structure of the leukemia oncogene LMO2: implications for the assembly of a hematopoietic transcription factor complex.</title>
        <authorList>
            <person name="El Omari K."/>
            <person name="Hoosdally S.J."/>
            <person name="Tuladhar K."/>
            <person name="Karia D."/>
            <person name="Vyas P."/>
            <person name="Patient R."/>
            <person name="Porcher C."/>
            <person name="Mancini E.J."/>
        </authorList>
    </citation>
    <scope>X-RAY CRYSTALLOGRAPHY (2.4 ANGSTROMS) OF 334-368 ALONE AND IN COMPLEX WITH LMO2</scope>
    <scope>SUBUNIT</scope>
</reference>
<reference key="18">
    <citation type="journal article" date="2006" name="Science">
        <title>The consensus coding sequences of human breast and colorectal cancers.</title>
        <authorList>
            <person name="Sjoeblom T."/>
            <person name="Jones S."/>
            <person name="Wood L.D."/>
            <person name="Parsons D.W."/>
            <person name="Lin J."/>
            <person name="Barber T.D."/>
            <person name="Mandelker D."/>
            <person name="Leary R.J."/>
            <person name="Ptak J."/>
            <person name="Silliman N."/>
            <person name="Szabo S."/>
            <person name="Buckhaults P."/>
            <person name="Farrell C."/>
            <person name="Meeh P."/>
            <person name="Markowitz S.D."/>
            <person name="Willis J."/>
            <person name="Dawson D."/>
            <person name="Willson J.K.V."/>
            <person name="Gazdar A.F."/>
            <person name="Hartigan J."/>
            <person name="Wu L."/>
            <person name="Liu C."/>
            <person name="Parmigiani G."/>
            <person name="Park B.H."/>
            <person name="Bachman K.E."/>
            <person name="Papadopoulos N."/>
            <person name="Vogelstein B."/>
            <person name="Kinzler K.W."/>
            <person name="Velculescu V.E."/>
        </authorList>
    </citation>
    <scope>VARIANT [LARGE SCALE ANALYSIS] GLN-299</scope>
</reference>
<keyword id="KW-0002">3D-structure</keyword>
<keyword id="KW-0007">Acetylation</keyword>
<keyword id="KW-0025">Alternative splicing</keyword>
<keyword id="KW-0217">Developmental protein</keyword>
<keyword id="KW-0539">Nucleus</keyword>
<keyword id="KW-0597">Phosphoprotein</keyword>
<keyword id="KW-1267">Proteomics identification</keyword>
<keyword id="KW-1185">Reference proteome</keyword>
<keyword id="KW-0832">Ubl conjugation</keyword>
<proteinExistence type="evidence at protein level"/>